<proteinExistence type="inferred from homology"/>
<protein>
    <recommendedName>
        <fullName evidence="1">Peptide chain release factor 1</fullName>
        <shortName evidence="1">RF-1</shortName>
    </recommendedName>
</protein>
<feature type="chain" id="PRO_1000093457" description="Peptide chain release factor 1">
    <location>
        <begin position="1"/>
        <end position="356"/>
    </location>
</feature>
<feature type="modified residue" description="N5-methylglutamine" evidence="1">
    <location>
        <position position="234"/>
    </location>
</feature>
<organism>
    <name type="scientific">Parafrankia sp. (strain EAN1pec)</name>
    <dbReference type="NCBI Taxonomy" id="298653"/>
    <lineage>
        <taxon>Bacteria</taxon>
        <taxon>Bacillati</taxon>
        <taxon>Actinomycetota</taxon>
        <taxon>Actinomycetes</taxon>
        <taxon>Frankiales</taxon>
        <taxon>Frankiaceae</taxon>
        <taxon>Parafrankia</taxon>
    </lineage>
</organism>
<gene>
    <name evidence="1" type="primary">prfA</name>
    <name type="ordered locus">Franean1_1010</name>
</gene>
<comment type="function">
    <text evidence="1">Peptide chain release factor 1 directs the termination of translation in response to the peptide chain termination codons UAG and UAA.</text>
</comment>
<comment type="subcellular location">
    <subcellularLocation>
        <location evidence="1">Cytoplasm</location>
    </subcellularLocation>
</comment>
<comment type="PTM">
    <text evidence="1">Methylated by PrmC. Methylation increases the termination efficiency of RF1.</text>
</comment>
<comment type="similarity">
    <text evidence="1">Belongs to the prokaryotic/mitochondrial release factor family.</text>
</comment>
<name>RF1_PARS2</name>
<accession>A8L3V1</accession>
<evidence type="ECO:0000255" key="1">
    <source>
        <dbReference type="HAMAP-Rule" id="MF_00093"/>
    </source>
</evidence>
<reference key="1">
    <citation type="journal article" date="2007" name="Genome Res.">
        <title>Genome characteristics of facultatively symbiotic Frankia sp. strains reflect host range and host plant biogeography.</title>
        <authorList>
            <person name="Normand P."/>
            <person name="Lapierre P."/>
            <person name="Tisa L.S."/>
            <person name="Gogarten J.P."/>
            <person name="Alloisio N."/>
            <person name="Bagnarol E."/>
            <person name="Bassi C.A."/>
            <person name="Berry A.M."/>
            <person name="Bickhart D.M."/>
            <person name="Choisne N."/>
            <person name="Couloux A."/>
            <person name="Cournoyer B."/>
            <person name="Cruveiller S."/>
            <person name="Daubin V."/>
            <person name="Demange N."/>
            <person name="Francino M.P."/>
            <person name="Goltsman E."/>
            <person name="Huang Y."/>
            <person name="Kopp O.R."/>
            <person name="Labarre L."/>
            <person name="Lapidus A."/>
            <person name="Lavire C."/>
            <person name="Marechal J."/>
            <person name="Martinez M."/>
            <person name="Mastronunzio J.E."/>
            <person name="Mullin B.C."/>
            <person name="Niemann J."/>
            <person name="Pujic P."/>
            <person name="Rawnsley T."/>
            <person name="Rouy Z."/>
            <person name="Schenowitz C."/>
            <person name="Sellstedt A."/>
            <person name="Tavares F."/>
            <person name="Tomkins J.P."/>
            <person name="Vallenet D."/>
            <person name="Valverde C."/>
            <person name="Wall L.G."/>
            <person name="Wang Y."/>
            <person name="Medigue C."/>
            <person name="Benson D.R."/>
        </authorList>
    </citation>
    <scope>NUCLEOTIDE SEQUENCE [LARGE SCALE GENOMIC DNA]</scope>
    <source>
        <strain>EAN1pec</strain>
    </source>
</reference>
<sequence>MTSPLAGMIAEHADIEKRLADPDIHNDPARARELTRRYAELATPVDLAQRLERVEGDLETAREFAEQDPSFRDEVVALEASQADLAARLRAYLVPVDPDDSRDAILEVKAGAGGEESALFAGDLLRMYLRYAERRGWRTQILDANPSDLGGYRDVSVAVKSRGTAAPGQGVFGRLRFEGGVHRVQRVPVTESAGRIHTSAAGVLVLPEAADVDIEVDPNDLRIDVFRSSGPGGQSVNTTDSAVRITHLPTGVVVSCQNEKSQLQNKESAMRILRARLLAAAREKAETAAAAARASQVRTVDRSEKVRTYNFPENRISDHRIGYKAHNLEAVLDGDLDAVIEALTEADLESRMAATP</sequence>
<dbReference type="EMBL" id="CP000820">
    <property type="protein sequence ID" value="ABW10466.1"/>
    <property type="molecule type" value="Genomic_DNA"/>
</dbReference>
<dbReference type="RefSeq" id="WP_020458648.1">
    <property type="nucleotide sequence ID" value="NC_009921.1"/>
</dbReference>
<dbReference type="SMR" id="A8L3V1"/>
<dbReference type="STRING" id="298653.Franean1_1010"/>
<dbReference type="KEGG" id="fre:Franean1_1010"/>
<dbReference type="eggNOG" id="COG0216">
    <property type="taxonomic scope" value="Bacteria"/>
</dbReference>
<dbReference type="HOGENOM" id="CLU_036856_0_1_11"/>
<dbReference type="GO" id="GO:0005737">
    <property type="term" value="C:cytoplasm"/>
    <property type="evidence" value="ECO:0007669"/>
    <property type="project" value="UniProtKB-SubCell"/>
</dbReference>
<dbReference type="GO" id="GO:0016149">
    <property type="term" value="F:translation release factor activity, codon specific"/>
    <property type="evidence" value="ECO:0007669"/>
    <property type="project" value="UniProtKB-UniRule"/>
</dbReference>
<dbReference type="FunFam" id="3.30.160.20:FF:000004">
    <property type="entry name" value="Peptide chain release factor 1"/>
    <property type="match status" value="1"/>
</dbReference>
<dbReference type="FunFam" id="3.30.70.1660:FF:000002">
    <property type="entry name" value="Peptide chain release factor 1"/>
    <property type="match status" value="1"/>
</dbReference>
<dbReference type="Gene3D" id="3.30.160.20">
    <property type="match status" value="1"/>
</dbReference>
<dbReference type="Gene3D" id="3.30.70.1660">
    <property type="match status" value="1"/>
</dbReference>
<dbReference type="Gene3D" id="6.10.140.1950">
    <property type="match status" value="1"/>
</dbReference>
<dbReference type="HAMAP" id="MF_00093">
    <property type="entry name" value="Rel_fac_1"/>
    <property type="match status" value="1"/>
</dbReference>
<dbReference type="InterPro" id="IPR005139">
    <property type="entry name" value="PCRF"/>
</dbReference>
<dbReference type="InterPro" id="IPR000352">
    <property type="entry name" value="Pep_chain_release_fac_I"/>
</dbReference>
<dbReference type="InterPro" id="IPR045853">
    <property type="entry name" value="Pep_chain_release_fac_I_sf"/>
</dbReference>
<dbReference type="InterPro" id="IPR050057">
    <property type="entry name" value="Prokaryotic/Mito_RF"/>
</dbReference>
<dbReference type="InterPro" id="IPR004373">
    <property type="entry name" value="RF-1"/>
</dbReference>
<dbReference type="NCBIfam" id="TIGR00019">
    <property type="entry name" value="prfA"/>
    <property type="match status" value="1"/>
</dbReference>
<dbReference type="NCBIfam" id="NF001859">
    <property type="entry name" value="PRK00591.1"/>
    <property type="match status" value="1"/>
</dbReference>
<dbReference type="PANTHER" id="PTHR43804">
    <property type="entry name" value="LD18447P"/>
    <property type="match status" value="1"/>
</dbReference>
<dbReference type="PANTHER" id="PTHR43804:SF7">
    <property type="entry name" value="LD18447P"/>
    <property type="match status" value="1"/>
</dbReference>
<dbReference type="Pfam" id="PF03462">
    <property type="entry name" value="PCRF"/>
    <property type="match status" value="1"/>
</dbReference>
<dbReference type="Pfam" id="PF00472">
    <property type="entry name" value="RF-1"/>
    <property type="match status" value="1"/>
</dbReference>
<dbReference type="SMART" id="SM00937">
    <property type="entry name" value="PCRF"/>
    <property type="match status" value="1"/>
</dbReference>
<dbReference type="SUPFAM" id="SSF75620">
    <property type="entry name" value="Release factor"/>
    <property type="match status" value="1"/>
</dbReference>
<dbReference type="PROSITE" id="PS00745">
    <property type="entry name" value="RF_PROK_I"/>
    <property type="match status" value="1"/>
</dbReference>
<keyword id="KW-0963">Cytoplasm</keyword>
<keyword id="KW-0488">Methylation</keyword>
<keyword id="KW-0648">Protein biosynthesis</keyword>